<reference key="1">
    <citation type="submission" date="2007-03" db="EMBL/GenBank/DDBJ databases">
        <title>Sequencing analysis of Lepidium virginicum JO26 chloroplast DNA.</title>
        <authorList>
            <person name="Hosouchi T."/>
            <person name="Tsuruoka H."/>
            <person name="Kotani H."/>
        </authorList>
    </citation>
    <scope>NUCLEOTIDE SEQUENCE [LARGE SCALE GENOMIC DNA]</scope>
</reference>
<sequence length="29" mass="3170">MDIVSLAWAALMVVFTFSLSLVVWGRSGL</sequence>
<name>PETN_LEPVR</name>
<accession>A4QL99</accession>
<feature type="chain" id="PRO_0000355446" description="Cytochrome b6-f complex subunit 8">
    <location>
        <begin position="1"/>
        <end position="29"/>
    </location>
</feature>
<feature type="transmembrane region" description="Helical" evidence="1">
    <location>
        <begin position="3"/>
        <end position="23"/>
    </location>
</feature>
<evidence type="ECO:0000255" key="1">
    <source>
        <dbReference type="HAMAP-Rule" id="MF_00395"/>
    </source>
</evidence>
<protein>
    <recommendedName>
        <fullName evidence="1">Cytochrome b6-f complex subunit 8</fullName>
    </recommendedName>
    <alternativeName>
        <fullName evidence="1">Cytochrome b6-f complex subunit PetN</fullName>
    </alternativeName>
    <alternativeName>
        <fullName evidence="1">Cytochrome b6-f complex subunit VIII</fullName>
    </alternativeName>
</protein>
<proteinExistence type="inferred from homology"/>
<organism>
    <name type="scientific">Lepidium virginicum</name>
    <name type="common">Virginia pepperweed</name>
    <dbReference type="NCBI Taxonomy" id="59292"/>
    <lineage>
        <taxon>Eukaryota</taxon>
        <taxon>Viridiplantae</taxon>
        <taxon>Streptophyta</taxon>
        <taxon>Embryophyta</taxon>
        <taxon>Tracheophyta</taxon>
        <taxon>Spermatophyta</taxon>
        <taxon>Magnoliopsida</taxon>
        <taxon>eudicotyledons</taxon>
        <taxon>Gunneridae</taxon>
        <taxon>Pentapetalae</taxon>
        <taxon>rosids</taxon>
        <taxon>malvids</taxon>
        <taxon>Brassicales</taxon>
        <taxon>Brassicaceae</taxon>
        <taxon>Lepidieae</taxon>
        <taxon>Lepidium</taxon>
    </lineage>
</organism>
<geneLocation type="chloroplast"/>
<comment type="function">
    <text evidence="1">Component of the cytochrome b6-f complex, which mediates electron transfer between photosystem II (PSII) and photosystem I (PSI), cyclic electron flow around PSI, and state transitions.</text>
</comment>
<comment type="subunit">
    <text evidence="1">The 4 large subunits of the cytochrome b6-f complex are cytochrome b6, subunit IV (17 kDa polypeptide, PetD), cytochrome f and the Rieske protein, while the 4 small subunits are PetG, PetL, PetM and PetN. The complex functions as a dimer.</text>
</comment>
<comment type="subcellular location">
    <subcellularLocation>
        <location evidence="1">Plastid</location>
        <location evidence="1">Chloroplast thylakoid membrane</location>
        <topology evidence="1">Single-pass membrane protein</topology>
    </subcellularLocation>
</comment>
<comment type="similarity">
    <text evidence="1">Belongs to the PetN family.</text>
</comment>
<dbReference type="EMBL" id="AP009374">
    <property type="protein sequence ID" value="BAF50454.1"/>
    <property type="molecule type" value="Genomic_DNA"/>
</dbReference>
<dbReference type="RefSeq" id="YP_001123630.1">
    <property type="nucleotide sequence ID" value="NC_009273.1"/>
</dbReference>
<dbReference type="SMR" id="A4QL99"/>
<dbReference type="GeneID" id="4962074"/>
<dbReference type="GO" id="GO:0009535">
    <property type="term" value="C:chloroplast thylakoid membrane"/>
    <property type="evidence" value="ECO:0007669"/>
    <property type="project" value="UniProtKB-SubCell"/>
</dbReference>
<dbReference type="GO" id="GO:0009512">
    <property type="term" value="C:cytochrome b6f complex"/>
    <property type="evidence" value="ECO:0007669"/>
    <property type="project" value="InterPro"/>
</dbReference>
<dbReference type="GO" id="GO:0045158">
    <property type="term" value="F:electron transporter, transferring electrons within cytochrome b6/f complex of photosystem II activity"/>
    <property type="evidence" value="ECO:0007669"/>
    <property type="project" value="InterPro"/>
</dbReference>
<dbReference type="GO" id="GO:0017004">
    <property type="term" value="P:cytochrome complex assembly"/>
    <property type="evidence" value="ECO:0007669"/>
    <property type="project" value="UniProtKB-UniRule"/>
</dbReference>
<dbReference type="GO" id="GO:0015979">
    <property type="term" value="P:photosynthesis"/>
    <property type="evidence" value="ECO:0007669"/>
    <property type="project" value="UniProtKB-KW"/>
</dbReference>
<dbReference type="HAMAP" id="MF_00395">
    <property type="entry name" value="Cytb6_f_PetN"/>
    <property type="match status" value="1"/>
</dbReference>
<dbReference type="InterPro" id="IPR036143">
    <property type="entry name" value="Cytochr_b6-f_cplx_su8_sf"/>
</dbReference>
<dbReference type="InterPro" id="IPR005497">
    <property type="entry name" value="Cytochrome_b6-f_cplx_su8"/>
</dbReference>
<dbReference type="Pfam" id="PF03742">
    <property type="entry name" value="PetN"/>
    <property type="match status" value="1"/>
</dbReference>
<dbReference type="SUPFAM" id="SSF103451">
    <property type="entry name" value="PetN subunit of the cytochrome b6f complex"/>
    <property type="match status" value="1"/>
</dbReference>
<keyword id="KW-0150">Chloroplast</keyword>
<keyword id="KW-0249">Electron transport</keyword>
<keyword id="KW-0472">Membrane</keyword>
<keyword id="KW-0602">Photosynthesis</keyword>
<keyword id="KW-0934">Plastid</keyword>
<keyword id="KW-0793">Thylakoid</keyword>
<keyword id="KW-0812">Transmembrane</keyword>
<keyword id="KW-1133">Transmembrane helix</keyword>
<keyword id="KW-0813">Transport</keyword>
<gene>
    <name evidence="1" type="primary">petN</name>
</gene>